<evidence type="ECO:0000255" key="1">
    <source>
        <dbReference type="HAMAP-Rule" id="MF_00036"/>
    </source>
</evidence>
<keyword id="KW-0030">Aminoacyl-tRNA synthetase</keyword>
<keyword id="KW-0067">ATP-binding</keyword>
<keyword id="KW-0963">Cytoplasm</keyword>
<keyword id="KW-0436">Ligase</keyword>
<keyword id="KW-0479">Metal-binding</keyword>
<keyword id="KW-0547">Nucleotide-binding</keyword>
<keyword id="KW-0648">Protein biosynthesis</keyword>
<keyword id="KW-1185">Reference proteome</keyword>
<keyword id="KW-0694">RNA-binding</keyword>
<keyword id="KW-0820">tRNA-binding</keyword>
<keyword id="KW-0862">Zinc</keyword>
<feature type="chain" id="PRO_0000347589" description="Alanine--tRNA ligase">
    <location>
        <begin position="1"/>
        <end position="873"/>
    </location>
</feature>
<feature type="binding site" evidence="1">
    <location>
        <position position="562"/>
    </location>
    <ligand>
        <name>Zn(2+)</name>
        <dbReference type="ChEBI" id="CHEBI:29105"/>
    </ligand>
</feature>
<feature type="binding site" evidence="1">
    <location>
        <position position="566"/>
    </location>
    <ligand>
        <name>Zn(2+)</name>
        <dbReference type="ChEBI" id="CHEBI:29105"/>
    </ligand>
</feature>
<feature type="binding site" evidence="1">
    <location>
        <position position="666"/>
    </location>
    <ligand>
        <name>Zn(2+)</name>
        <dbReference type="ChEBI" id="CHEBI:29105"/>
    </ligand>
</feature>
<feature type="binding site" evidence="1">
    <location>
        <position position="670"/>
    </location>
    <ligand>
        <name>Zn(2+)</name>
        <dbReference type="ChEBI" id="CHEBI:29105"/>
    </ligand>
</feature>
<sequence>MKTMTTAEIRRAFLNYFSENGHKIVHSASLVPGNDPTLLFTNAGMVPFKELFIGTETRDYRRATSAQRCVRAGGKHNDLENVGYTARHHTFFEMLGNFSFGDYFKAEAIPFAWRFLTEVLQLPAEKLLVTVYHEDDEAYRIWQEKIGLPADRIIRIGDKAGKAKYESDNFWAMGDTGPCGPCTEIFYDHGAEIFGGRPGSADEDGDRFIEIWNIVFMQFERDAEGTMKPLPKPSIDTGMGLERIAAVMQGVHSNYDIDLFIHLIDAAAKAVGCKNEGQASLKVIADHIRATVFLMVDGVLPSNEGRGYVLRRIMRRAIRHGYKLGQQGLFFHKLVAALVAEMGEAYPEIIAEQARITETIRKEELRFAQTLTAGMQILEQDLATLKGTIISGETVFKLYDTYGFPVDLTNDIARERGLTLDEAGYEALMQAQRERAKASGTFRADKTYTVSGKTAFLAYQQEQTESTIEAIFVQEQAADTLDCGDEAVLVLNQSPFYGESGGQIGDSGVIYHQNGAFLVSDTQKQGDVLLHFGRLQRGVLSVGDTVCAEIDRARRAAIRRHHSATHLLHQALRMTLGTHVQQKGSLVDADKLRFDFSHDAALTAAEIGAVEQLINEQILRNQPVNISEMPYDQACAQGAMALFGEKYGDIVRVVKMGADDFSVELCGGTHVKQTGDLGLVKIIAQSAVAAGIRRVECVAGLAALRYCQQQETQLQRIAAVLKSDLEHSVEKIERLQQDTKTLEKTVQQLKRTVALGGTQETAESVVDIHGWKTMAVRRDDLDNAILRDTADQLRDKYQLDVVVIGSSDGEMARLVVSVAKSAAALKAGAIVQTLAAFIDGKGGGRPDFAQAGGKNIQGLDAALAALPQALPQK</sequence>
<accession>A5EW88</accession>
<comment type="function">
    <text evidence="1">Catalyzes the attachment of alanine to tRNA(Ala) in a two-step reaction: alanine is first activated by ATP to form Ala-AMP and then transferred to the acceptor end of tRNA(Ala). Also edits incorrectly charged Ser-tRNA(Ala) and Gly-tRNA(Ala) via its editing domain.</text>
</comment>
<comment type="catalytic activity">
    <reaction evidence="1">
        <text>tRNA(Ala) + L-alanine + ATP = L-alanyl-tRNA(Ala) + AMP + diphosphate</text>
        <dbReference type="Rhea" id="RHEA:12540"/>
        <dbReference type="Rhea" id="RHEA-COMP:9657"/>
        <dbReference type="Rhea" id="RHEA-COMP:9923"/>
        <dbReference type="ChEBI" id="CHEBI:30616"/>
        <dbReference type="ChEBI" id="CHEBI:33019"/>
        <dbReference type="ChEBI" id="CHEBI:57972"/>
        <dbReference type="ChEBI" id="CHEBI:78442"/>
        <dbReference type="ChEBI" id="CHEBI:78497"/>
        <dbReference type="ChEBI" id="CHEBI:456215"/>
        <dbReference type="EC" id="6.1.1.7"/>
    </reaction>
</comment>
<comment type="cofactor">
    <cofactor evidence="1">
        <name>Zn(2+)</name>
        <dbReference type="ChEBI" id="CHEBI:29105"/>
    </cofactor>
    <text evidence="1">Binds 1 zinc ion per subunit.</text>
</comment>
<comment type="subcellular location">
    <subcellularLocation>
        <location evidence="1">Cytoplasm</location>
    </subcellularLocation>
</comment>
<comment type="domain">
    <text evidence="1">Consists of three domains; the N-terminal catalytic domain, the editing domain and the C-terminal C-Ala domain. The editing domain removes incorrectly charged amino acids, while the C-Ala domain, along with tRNA(Ala), serves as a bridge to cooperatively bring together the editing and aminoacylation centers thus stimulating deacylation of misacylated tRNAs.</text>
</comment>
<comment type="similarity">
    <text evidence="1">Belongs to the class-II aminoacyl-tRNA synthetase family.</text>
</comment>
<gene>
    <name evidence="1" type="primary">alaS</name>
    <name type="ordered locus">DNO_0286</name>
</gene>
<name>SYA_DICNV</name>
<dbReference type="EC" id="6.1.1.7" evidence="1"/>
<dbReference type="EMBL" id="CP000513">
    <property type="protein sequence ID" value="ABQ13261.1"/>
    <property type="molecule type" value="Genomic_DNA"/>
</dbReference>
<dbReference type="SMR" id="A5EW88"/>
<dbReference type="STRING" id="246195.DNO_0286"/>
<dbReference type="KEGG" id="dno:DNO_0286"/>
<dbReference type="eggNOG" id="COG0013">
    <property type="taxonomic scope" value="Bacteria"/>
</dbReference>
<dbReference type="HOGENOM" id="CLU_004485_1_1_6"/>
<dbReference type="OrthoDB" id="9803884at2"/>
<dbReference type="Proteomes" id="UP000000248">
    <property type="component" value="Chromosome"/>
</dbReference>
<dbReference type="GO" id="GO:0005829">
    <property type="term" value="C:cytosol"/>
    <property type="evidence" value="ECO:0007669"/>
    <property type="project" value="TreeGrafter"/>
</dbReference>
<dbReference type="GO" id="GO:0004813">
    <property type="term" value="F:alanine-tRNA ligase activity"/>
    <property type="evidence" value="ECO:0007669"/>
    <property type="project" value="UniProtKB-UniRule"/>
</dbReference>
<dbReference type="GO" id="GO:0002161">
    <property type="term" value="F:aminoacyl-tRNA deacylase activity"/>
    <property type="evidence" value="ECO:0007669"/>
    <property type="project" value="TreeGrafter"/>
</dbReference>
<dbReference type="GO" id="GO:0005524">
    <property type="term" value="F:ATP binding"/>
    <property type="evidence" value="ECO:0007669"/>
    <property type="project" value="UniProtKB-UniRule"/>
</dbReference>
<dbReference type="GO" id="GO:0000049">
    <property type="term" value="F:tRNA binding"/>
    <property type="evidence" value="ECO:0007669"/>
    <property type="project" value="UniProtKB-KW"/>
</dbReference>
<dbReference type="GO" id="GO:0008270">
    <property type="term" value="F:zinc ion binding"/>
    <property type="evidence" value="ECO:0007669"/>
    <property type="project" value="UniProtKB-UniRule"/>
</dbReference>
<dbReference type="GO" id="GO:0006419">
    <property type="term" value="P:alanyl-tRNA aminoacylation"/>
    <property type="evidence" value="ECO:0007669"/>
    <property type="project" value="UniProtKB-UniRule"/>
</dbReference>
<dbReference type="GO" id="GO:0045892">
    <property type="term" value="P:negative regulation of DNA-templated transcription"/>
    <property type="evidence" value="ECO:0007669"/>
    <property type="project" value="TreeGrafter"/>
</dbReference>
<dbReference type="CDD" id="cd00673">
    <property type="entry name" value="AlaRS_core"/>
    <property type="match status" value="1"/>
</dbReference>
<dbReference type="FunFam" id="2.40.30.130:FF:000001">
    <property type="entry name" value="Alanine--tRNA ligase"/>
    <property type="match status" value="1"/>
</dbReference>
<dbReference type="FunFam" id="3.10.310.40:FF:000001">
    <property type="entry name" value="Alanine--tRNA ligase"/>
    <property type="match status" value="1"/>
</dbReference>
<dbReference type="FunFam" id="3.30.54.20:FF:000001">
    <property type="entry name" value="Alanine--tRNA ligase"/>
    <property type="match status" value="1"/>
</dbReference>
<dbReference type="FunFam" id="3.30.930.10:FF:000004">
    <property type="entry name" value="Alanine--tRNA ligase"/>
    <property type="match status" value="1"/>
</dbReference>
<dbReference type="FunFam" id="3.30.980.10:FF:000004">
    <property type="entry name" value="Alanine--tRNA ligase, cytoplasmic"/>
    <property type="match status" value="1"/>
</dbReference>
<dbReference type="Gene3D" id="2.40.30.130">
    <property type="match status" value="1"/>
</dbReference>
<dbReference type="Gene3D" id="3.10.310.40">
    <property type="match status" value="1"/>
</dbReference>
<dbReference type="Gene3D" id="3.30.54.20">
    <property type="match status" value="1"/>
</dbReference>
<dbReference type="Gene3D" id="6.10.250.550">
    <property type="match status" value="1"/>
</dbReference>
<dbReference type="Gene3D" id="3.30.930.10">
    <property type="entry name" value="Bira Bifunctional Protein, Domain 2"/>
    <property type="match status" value="1"/>
</dbReference>
<dbReference type="Gene3D" id="3.30.980.10">
    <property type="entry name" value="Threonyl-trna Synthetase, Chain A, domain 2"/>
    <property type="match status" value="1"/>
</dbReference>
<dbReference type="HAMAP" id="MF_00036_B">
    <property type="entry name" value="Ala_tRNA_synth_B"/>
    <property type="match status" value="1"/>
</dbReference>
<dbReference type="InterPro" id="IPR045864">
    <property type="entry name" value="aa-tRNA-synth_II/BPL/LPL"/>
</dbReference>
<dbReference type="InterPro" id="IPR002318">
    <property type="entry name" value="Ala-tRNA-lgiase_IIc"/>
</dbReference>
<dbReference type="InterPro" id="IPR018162">
    <property type="entry name" value="Ala-tRNA-ligase_IIc_anticod-bd"/>
</dbReference>
<dbReference type="InterPro" id="IPR018165">
    <property type="entry name" value="Ala-tRNA-synth_IIc_core"/>
</dbReference>
<dbReference type="InterPro" id="IPR018164">
    <property type="entry name" value="Ala-tRNA-synth_IIc_N"/>
</dbReference>
<dbReference type="InterPro" id="IPR050058">
    <property type="entry name" value="Ala-tRNA_ligase"/>
</dbReference>
<dbReference type="InterPro" id="IPR023033">
    <property type="entry name" value="Ala_tRNA_ligase_euk/bac"/>
</dbReference>
<dbReference type="InterPro" id="IPR003156">
    <property type="entry name" value="DHHA1_dom"/>
</dbReference>
<dbReference type="InterPro" id="IPR018163">
    <property type="entry name" value="Thr/Ala-tRNA-synth_IIc_edit"/>
</dbReference>
<dbReference type="InterPro" id="IPR009000">
    <property type="entry name" value="Transl_B-barrel_sf"/>
</dbReference>
<dbReference type="InterPro" id="IPR012947">
    <property type="entry name" value="tRNA_SAD"/>
</dbReference>
<dbReference type="NCBIfam" id="TIGR00344">
    <property type="entry name" value="alaS"/>
    <property type="match status" value="1"/>
</dbReference>
<dbReference type="PANTHER" id="PTHR11777:SF9">
    <property type="entry name" value="ALANINE--TRNA LIGASE, CYTOPLASMIC"/>
    <property type="match status" value="1"/>
</dbReference>
<dbReference type="PANTHER" id="PTHR11777">
    <property type="entry name" value="ALANYL-TRNA SYNTHETASE"/>
    <property type="match status" value="1"/>
</dbReference>
<dbReference type="Pfam" id="PF02272">
    <property type="entry name" value="DHHA1"/>
    <property type="match status" value="1"/>
</dbReference>
<dbReference type="Pfam" id="PF01411">
    <property type="entry name" value="tRNA-synt_2c"/>
    <property type="match status" value="1"/>
</dbReference>
<dbReference type="Pfam" id="PF07973">
    <property type="entry name" value="tRNA_SAD"/>
    <property type="match status" value="1"/>
</dbReference>
<dbReference type="PRINTS" id="PR00980">
    <property type="entry name" value="TRNASYNTHALA"/>
</dbReference>
<dbReference type="SMART" id="SM00863">
    <property type="entry name" value="tRNA_SAD"/>
    <property type="match status" value="1"/>
</dbReference>
<dbReference type="SUPFAM" id="SSF55681">
    <property type="entry name" value="Class II aaRS and biotin synthetases"/>
    <property type="match status" value="1"/>
</dbReference>
<dbReference type="SUPFAM" id="SSF101353">
    <property type="entry name" value="Putative anticodon-binding domain of alanyl-tRNA synthetase (AlaRS)"/>
    <property type="match status" value="1"/>
</dbReference>
<dbReference type="SUPFAM" id="SSF55186">
    <property type="entry name" value="ThrRS/AlaRS common domain"/>
    <property type="match status" value="1"/>
</dbReference>
<dbReference type="SUPFAM" id="SSF50447">
    <property type="entry name" value="Translation proteins"/>
    <property type="match status" value="1"/>
</dbReference>
<dbReference type="PROSITE" id="PS50860">
    <property type="entry name" value="AA_TRNA_LIGASE_II_ALA"/>
    <property type="match status" value="1"/>
</dbReference>
<reference key="1">
    <citation type="journal article" date="2007" name="Nat. Biotechnol.">
        <title>Genome sequence and identification of candidate vaccine antigens from the animal pathogen Dichelobacter nodosus.</title>
        <authorList>
            <person name="Myers G.S.A."/>
            <person name="Parker D."/>
            <person name="Al-Hasani K."/>
            <person name="Kennan R.M."/>
            <person name="Seemann T."/>
            <person name="Ren Q."/>
            <person name="Badger J.H."/>
            <person name="Selengut J.D."/>
            <person name="Deboy R.T."/>
            <person name="Tettelin H."/>
            <person name="Boyce J.D."/>
            <person name="McCarl V.P."/>
            <person name="Han X."/>
            <person name="Nelson W.C."/>
            <person name="Madupu R."/>
            <person name="Mohamoud Y."/>
            <person name="Holley T."/>
            <person name="Fedorova N."/>
            <person name="Khouri H."/>
            <person name="Bottomley S.P."/>
            <person name="Whittington R.J."/>
            <person name="Adler B."/>
            <person name="Songer J.G."/>
            <person name="Rood J.I."/>
            <person name="Paulsen I.T."/>
        </authorList>
    </citation>
    <scope>NUCLEOTIDE SEQUENCE [LARGE SCALE GENOMIC DNA]</scope>
    <source>
        <strain>VCS1703A</strain>
    </source>
</reference>
<proteinExistence type="inferred from homology"/>
<protein>
    <recommendedName>
        <fullName evidence="1">Alanine--tRNA ligase</fullName>
        <ecNumber evidence="1">6.1.1.7</ecNumber>
    </recommendedName>
    <alternativeName>
        <fullName evidence="1">Alanyl-tRNA synthetase</fullName>
        <shortName evidence="1">AlaRS</shortName>
    </alternativeName>
</protein>
<organism>
    <name type="scientific">Dichelobacter nodosus (strain VCS1703A)</name>
    <dbReference type="NCBI Taxonomy" id="246195"/>
    <lineage>
        <taxon>Bacteria</taxon>
        <taxon>Pseudomonadati</taxon>
        <taxon>Pseudomonadota</taxon>
        <taxon>Gammaproteobacteria</taxon>
        <taxon>Cardiobacteriales</taxon>
        <taxon>Cardiobacteriaceae</taxon>
        <taxon>Dichelobacter</taxon>
    </lineage>
</organism>